<keyword id="KW-0963">Cytoplasm</keyword>
<keyword id="KW-0648">Protein biosynthesis</keyword>
<name>RRF_BACP2</name>
<protein>
    <recommendedName>
        <fullName evidence="1">Ribosome-recycling factor</fullName>
        <shortName evidence="1">RRF</shortName>
    </recommendedName>
    <alternativeName>
        <fullName evidence="1">Ribosome-releasing factor</fullName>
    </alternativeName>
</protein>
<dbReference type="EMBL" id="CP000813">
    <property type="protein sequence ID" value="ABV62233.1"/>
    <property type="molecule type" value="Genomic_DNA"/>
</dbReference>
<dbReference type="RefSeq" id="WP_012009980.1">
    <property type="nucleotide sequence ID" value="NZ_VEIS01000003.1"/>
</dbReference>
<dbReference type="SMR" id="A8FDB6"/>
<dbReference type="STRING" id="315750.BPUM_1551"/>
<dbReference type="GeneID" id="5620814"/>
<dbReference type="KEGG" id="bpu:BPUM_1551"/>
<dbReference type="eggNOG" id="COG0233">
    <property type="taxonomic scope" value="Bacteria"/>
</dbReference>
<dbReference type="HOGENOM" id="CLU_073981_2_0_9"/>
<dbReference type="OrthoDB" id="9804006at2"/>
<dbReference type="Proteomes" id="UP000001355">
    <property type="component" value="Chromosome"/>
</dbReference>
<dbReference type="GO" id="GO:0005737">
    <property type="term" value="C:cytoplasm"/>
    <property type="evidence" value="ECO:0007669"/>
    <property type="project" value="UniProtKB-SubCell"/>
</dbReference>
<dbReference type="GO" id="GO:0043023">
    <property type="term" value="F:ribosomal large subunit binding"/>
    <property type="evidence" value="ECO:0007669"/>
    <property type="project" value="TreeGrafter"/>
</dbReference>
<dbReference type="GO" id="GO:0006415">
    <property type="term" value="P:translational termination"/>
    <property type="evidence" value="ECO:0007669"/>
    <property type="project" value="UniProtKB-UniRule"/>
</dbReference>
<dbReference type="CDD" id="cd00520">
    <property type="entry name" value="RRF"/>
    <property type="match status" value="1"/>
</dbReference>
<dbReference type="FunFam" id="1.10.132.20:FF:000001">
    <property type="entry name" value="Ribosome-recycling factor"/>
    <property type="match status" value="1"/>
</dbReference>
<dbReference type="FunFam" id="3.30.1360.40:FF:000001">
    <property type="entry name" value="Ribosome-recycling factor"/>
    <property type="match status" value="1"/>
</dbReference>
<dbReference type="Gene3D" id="3.30.1360.40">
    <property type="match status" value="1"/>
</dbReference>
<dbReference type="Gene3D" id="1.10.132.20">
    <property type="entry name" value="Ribosome-recycling factor"/>
    <property type="match status" value="2"/>
</dbReference>
<dbReference type="HAMAP" id="MF_00040">
    <property type="entry name" value="RRF"/>
    <property type="match status" value="1"/>
</dbReference>
<dbReference type="InterPro" id="IPR002661">
    <property type="entry name" value="Ribosome_recyc_fac"/>
</dbReference>
<dbReference type="InterPro" id="IPR023584">
    <property type="entry name" value="Ribosome_recyc_fac_dom"/>
</dbReference>
<dbReference type="InterPro" id="IPR036191">
    <property type="entry name" value="RRF_sf"/>
</dbReference>
<dbReference type="NCBIfam" id="TIGR00496">
    <property type="entry name" value="frr"/>
    <property type="match status" value="1"/>
</dbReference>
<dbReference type="PANTHER" id="PTHR20982:SF3">
    <property type="entry name" value="MITOCHONDRIAL RIBOSOME RECYCLING FACTOR PSEUDO 1"/>
    <property type="match status" value="1"/>
</dbReference>
<dbReference type="PANTHER" id="PTHR20982">
    <property type="entry name" value="RIBOSOME RECYCLING FACTOR"/>
    <property type="match status" value="1"/>
</dbReference>
<dbReference type="Pfam" id="PF01765">
    <property type="entry name" value="RRF"/>
    <property type="match status" value="1"/>
</dbReference>
<dbReference type="SUPFAM" id="SSF55194">
    <property type="entry name" value="Ribosome recycling factor, RRF"/>
    <property type="match status" value="1"/>
</dbReference>
<gene>
    <name evidence="1" type="primary">frr</name>
    <name type="ordered locus">BPUM_1551</name>
</gene>
<reference key="1">
    <citation type="journal article" date="2007" name="PLoS ONE">
        <title>Paradoxical DNA repair and peroxide resistance gene conservation in Bacillus pumilus SAFR-032.</title>
        <authorList>
            <person name="Gioia J."/>
            <person name="Yerrapragada S."/>
            <person name="Qin X."/>
            <person name="Jiang H."/>
            <person name="Igboeli O.C."/>
            <person name="Muzny D."/>
            <person name="Dugan-Rocha S."/>
            <person name="Ding Y."/>
            <person name="Hawes A."/>
            <person name="Liu W."/>
            <person name="Perez L."/>
            <person name="Kovar C."/>
            <person name="Dinh H."/>
            <person name="Lee S."/>
            <person name="Nazareth L."/>
            <person name="Blyth P."/>
            <person name="Holder M."/>
            <person name="Buhay C."/>
            <person name="Tirumalai M.R."/>
            <person name="Liu Y."/>
            <person name="Dasgupta I."/>
            <person name="Bokhetache L."/>
            <person name="Fujita M."/>
            <person name="Karouia F."/>
            <person name="Eswara Moorthy P."/>
            <person name="Siefert J."/>
            <person name="Uzman A."/>
            <person name="Buzumbo P."/>
            <person name="Verma A."/>
            <person name="Zwiya H."/>
            <person name="McWilliams B.D."/>
            <person name="Olowu A."/>
            <person name="Clinkenbeard K.D."/>
            <person name="Newcombe D."/>
            <person name="Golebiewski L."/>
            <person name="Petrosino J.F."/>
            <person name="Nicholson W.L."/>
            <person name="Fox G.E."/>
            <person name="Venkateswaran K."/>
            <person name="Highlander S.K."/>
            <person name="Weinstock G.M."/>
        </authorList>
    </citation>
    <scope>NUCLEOTIDE SEQUENCE [LARGE SCALE GENOMIC DNA]</scope>
    <source>
        <strain>SAFR-032</strain>
    </source>
</reference>
<organism>
    <name type="scientific">Bacillus pumilus (strain SAFR-032)</name>
    <dbReference type="NCBI Taxonomy" id="315750"/>
    <lineage>
        <taxon>Bacteria</taxon>
        <taxon>Bacillati</taxon>
        <taxon>Bacillota</taxon>
        <taxon>Bacilli</taxon>
        <taxon>Bacillales</taxon>
        <taxon>Bacillaceae</taxon>
        <taxon>Bacillus</taxon>
    </lineage>
</organism>
<evidence type="ECO:0000255" key="1">
    <source>
        <dbReference type="HAMAP-Rule" id="MF_00040"/>
    </source>
</evidence>
<accession>A8FDB6</accession>
<comment type="function">
    <text evidence="1">Responsible for the release of ribosomes from messenger RNA at the termination of protein biosynthesis. May increase the efficiency of translation by recycling ribosomes from one round of translation to another.</text>
</comment>
<comment type="subcellular location">
    <subcellularLocation>
        <location evidence="1">Cytoplasm</location>
    </subcellularLocation>
</comment>
<comment type="similarity">
    <text evidence="1">Belongs to the RRF family.</text>
</comment>
<sequence>MSKEVLNQTKEKMEKAVQAYGRELATVRAGRANASLLDKVTVDYYGAQTPLNQIASITVPEARMLIITPYDKTAIGDIEKSIQKSDLGITPTSDGNVIRIAIPALTEERRKELVKVVRKYSEEAKVAVRNVRRDANDELKKLEKNGEITEDELRSSTEDVQKLTDEYVAKIDDVMKDKEKEIMEV</sequence>
<proteinExistence type="inferred from homology"/>
<feature type="chain" id="PRO_1000057289" description="Ribosome-recycling factor">
    <location>
        <begin position="1"/>
        <end position="185"/>
    </location>
</feature>